<feature type="chain" id="PRO_0000309483" description="Pleckstrin homology domain-containing family O member 2">
    <location>
        <begin position="1"/>
        <end position="490"/>
    </location>
</feature>
<feature type="domain" description="PH" evidence="3">
    <location>
        <begin position="18"/>
        <end position="119"/>
    </location>
</feature>
<feature type="region of interest" description="Disordered" evidence="4">
    <location>
        <begin position="173"/>
        <end position="402"/>
    </location>
</feature>
<feature type="coiled-coil region" evidence="2">
    <location>
        <begin position="439"/>
        <end position="481"/>
    </location>
</feature>
<feature type="compositionally biased region" description="Low complexity" evidence="4">
    <location>
        <begin position="230"/>
        <end position="243"/>
    </location>
</feature>
<feature type="compositionally biased region" description="Acidic residues" evidence="4">
    <location>
        <begin position="244"/>
        <end position="257"/>
    </location>
</feature>
<feature type="compositionally biased region" description="Low complexity" evidence="4">
    <location>
        <begin position="277"/>
        <end position="297"/>
    </location>
</feature>
<feature type="modified residue" description="Phosphoserine" evidence="9">
    <location>
        <position position="164"/>
    </location>
</feature>
<feature type="modified residue" description="Phosphoserine" evidence="9">
    <location>
        <position position="167"/>
    </location>
</feature>
<feature type="modified residue" description="Phosphothreonine" evidence="1">
    <location>
        <position position="232"/>
    </location>
</feature>
<feature type="modified residue" description="Phosphoserine" evidence="1">
    <location>
        <position position="235"/>
    </location>
</feature>
<feature type="modified residue" description="Phosphoserine" evidence="1">
    <location>
        <position position="237"/>
    </location>
</feature>
<feature type="modified residue" description="Phosphoserine" evidence="1">
    <location>
        <position position="238"/>
    </location>
</feature>
<feature type="modified residue" description="Phosphoserine" evidence="9">
    <location>
        <position position="273"/>
    </location>
</feature>
<feature type="modified residue" description="Phosphothreonine" evidence="1">
    <location>
        <position position="298"/>
    </location>
</feature>
<feature type="modified residue" description="Phosphothreonine" evidence="8 9">
    <location>
        <position position="311"/>
    </location>
</feature>
<feature type="modified residue" description="Phosphoserine" evidence="8 9">
    <location>
        <position position="390"/>
    </location>
</feature>
<feature type="modified residue" description="Phosphoserine" evidence="8">
    <location>
        <position position="468"/>
    </location>
</feature>
<feature type="splice variant" id="VSP_029212" description="In isoform 2." evidence="6">
    <location>
        <begin position="4"/>
        <end position="53"/>
    </location>
</feature>
<feature type="sequence variant" id="VAR_036964" description="In dbSNP:rs2010875." evidence="5">
    <original>P</original>
    <variation>S</variation>
    <location>
        <position position="290"/>
    </location>
</feature>
<keyword id="KW-0025">Alternative splicing</keyword>
<keyword id="KW-0175">Coiled coil</keyword>
<keyword id="KW-0597">Phosphoprotein</keyword>
<keyword id="KW-1267">Proteomics identification</keyword>
<keyword id="KW-1185">Reference proteome</keyword>
<name>PKHO2_HUMAN</name>
<dbReference type="EMBL" id="AF494534">
    <property type="protein sequence ID" value="AAM18053.1"/>
    <property type="molecule type" value="mRNA"/>
</dbReference>
<dbReference type="EMBL" id="AC069368">
    <property type="status" value="NOT_ANNOTATED_CDS"/>
    <property type="molecule type" value="Genomic_DNA"/>
</dbReference>
<dbReference type="EMBL" id="CH471082">
    <property type="protein sequence ID" value="EAW77697.1"/>
    <property type="molecule type" value="Genomic_DNA"/>
</dbReference>
<dbReference type="EMBL" id="CH471082">
    <property type="protein sequence ID" value="EAW77699.1"/>
    <property type="molecule type" value="Genomic_DNA"/>
</dbReference>
<dbReference type="EMBL" id="BC008744">
    <property type="protein sequence ID" value="AAH08744.2"/>
    <property type="molecule type" value="mRNA"/>
</dbReference>
<dbReference type="EMBL" id="AF318373">
    <property type="protein sequence ID" value="AAL55880.1"/>
    <property type="status" value="ALT_INIT"/>
    <property type="molecule type" value="mRNA"/>
</dbReference>
<dbReference type="CCDS" id="CCDS10196.1">
    <molecule id="Q8TD55-1"/>
</dbReference>
<dbReference type="CCDS" id="CCDS73739.1">
    <molecule id="Q8TD55-2"/>
</dbReference>
<dbReference type="RefSeq" id="NP_001181988.1">
    <molecule id="Q8TD55-2"/>
    <property type="nucleotide sequence ID" value="NM_001195059.2"/>
</dbReference>
<dbReference type="RefSeq" id="NP_079477.2">
    <molecule id="Q8TD55-1"/>
    <property type="nucleotide sequence ID" value="NM_025201.4"/>
</dbReference>
<dbReference type="SMR" id="Q8TD55"/>
<dbReference type="BioGRID" id="123215">
    <property type="interactions" value="42"/>
</dbReference>
<dbReference type="FunCoup" id="Q8TD55">
    <property type="interactions" value="306"/>
</dbReference>
<dbReference type="IntAct" id="Q8TD55">
    <property type="interactions" value="21"/>
</dbReference>
<dbReference type="MINT" id="Q8TD55"/>
<dbReference type="STRING" id="9606.ENSP00000326706"/>
<dbReference type="CarbonylDB" id="Q8TD55"/>
<dbReference type="GlyCosmos" id="Q8TD55">
    <property type="glycosylation" value="1 site, 1 glycan"/>
</dbReference>
<dbReference type="GlyGen" id="Q8TD55">
    <property type="glycosylation" value="2 sites, 1 O-linked glycan (1 site)"/>
</dbReference>
<dbReference type="iPTMnet" id="Q8TD55"/>
<dbReference type="PhosphoSitePlus" id="Q8TD55"/>
<dbReference type="BioMuta" id="PLEKHO2"/>
<dbReference type="DMDM" id="74739384"/>
<dbReference type="jPOST" id="Q8TD55"/>
<dbReference type="MassIVE" id="Q8TD55"/>
<dbReference type="PaxDb" id="9606-ENSP00000326706"/>
<dbReference type="PeptideAtlas" id="Q8TD55"/>
<dbReference type="ProteomicsDB" id="74242">
    <molecule id="Q8TD55-1"/>
</dbReference>
<dbReference type="ProteomicsDB" id="74243">
    <molecule id="Q8TD55-2"/>
</dbReference>
<dbReference type="Pumba" id="Q8TD55"/>
<dbReference type="Antibodypedia" id="34926">
    <property type="antibodies" value="109 antibodies from 23 providers"/>
</dbReference>
<dbReference type="DNASU" id="80301"/>
<dbReference type="Ensembl" id="ENST00000323544.5">
    <molecule id="Q8TD55-1"/>
    <property type="protein sequence ID" value="ENSP00000326706.4"/>
    <property type="gene ID" value="ENSG00000241839.10"/>
</dbReference>
<dbReference type="Ensembl" id="ENST00000616065.4">
    <molecule id="Q8TD55-2"/>
    <property type="protein sequence ID" value="ENSP00000483505.1"/>
    <property type="gene ID" value="ENSG00000241839.10"/>
</dbReference>
<dbReference type="GeneID" id="80301"/>
<dbReference type="KEGG" id="hsa:80301"/>
<dbReference type="MANE-Select" id="ENST00000323544.5">
    <property type="protein sequence ID" value="ENSP00000326706.4"/>
    <property type="RefSeq nucleotide sequence ID" value="NM_025201.5"/>
    <property type="RefSeq protein sequence ID" value="NP_079477.2"/>
</dbReference>
<dbReference type="UCSC" id="uc002anv.4">
    <molecule id="Q8TD55-1"/>
    <property type="organism name" value="human"/>
</dbReference>
<dbReference type="AGR" id="HGNC:30026"/>
<dbReference type="CTD" id="80301"/>
<dbReference type="DisGeNET" id="80301"/>
<dbReference type="GeneCards" id="PLEKHO2"/>
<dbReference type="HGNC" id="HGNC:30026">
    <property type="gene designation" value="PLEKHO2"/>
</dbReference>
<dbReference type="HPA" id="ENSG00000241839">
    <property type="expression patterns" value="Tissue enhanced (lymphoid)"/>
</dbReference>
<dbReference type="neXtProt" id="NX_Q8TD55"/>
<dbReference type="OpenTargets" id="ENSG00000241839"/>
<dbReference type="PharmGKB" id="PA162399756"/>
<dbReference type="VEuPathDB" id="HostDB:ENSG00000241839"/>
<dbReference type="eggNOG" id="ENOG502QVFF">
    <property type="taxonomic scope" value="Eukaryota"/>
</dbReference>
<dbReference type="GeneTree" id="ENSGT00530000063760"/>
<dbReference type="HOGENOM" id="CLU_026551_3_0_1"/>
<dbReference type="InParanoid" id="Q8TD55"/>
<dbReference type="OMA" id="LGHWKDR"/>
<dbReference type="OrthoDB" id="8860305at2759"/>
<dbReference type="PAN-GO" id="Q8TD55">
    <property type="GO annotations" value="1 GO annotation based on evolutionary models"/>
</dbReference>
<dbReference type="PhylomeDB" id="Q8TD55"/>
<dbReference type="TreeFam" id="TF333115"/>
<dbReference type="PathwayCommons" id="Q8TD55"/>
<dbReference type="Reactome" id="R-HSA-6798695">
    <property type="pathway name" value="Neutrophil degranulation"/>
</dbReference>
<dbReference type="SignaLink" id="Q8TD55"/>
<dbReference type="BioGRID-ORCS" id="80301">
    <property type="hits" value="9 hits in 1151 CRISPR screens"/>
</dbReference>
<dbReference type="ChiTaRS" id="PLEKHO2">
    <property type="organism name" value="human"/>
</dbReference>
<dbReference type="GenomeRNAi" id="80301"/>
<dbReference type="Pharos" id="Q8TD55">
    <property type="development level" value="Tdark"/>
</dbReference>
<dbReference type="PRO" id="PR:Q8TD55"/>
<dbReference type="Proteomes" id="UP000005640">
    <property type="component" value="Chromosome 15"/>
</dbReference>
<dbReference type="RNAct" id="Q8TD55">
    <property type="molecule type" value="protein"/>
</dbReference>
<dbReference type="Bgee" id="ENSG00000241839">
    <property type="expression patterns" value="Expressed in spleen and 155 other cell types or tissues"/>
</dbReference>
<dbReference type="GO" id="GO:0005576">
    <property type="term" value="C:extracellular region"/>
    <property type="evidence" value="ECO:0000304"/>
    <property type="project" value="Reactome"/>
</dbReference>
<dbReference type="GO" id="GO:1904813">
    <property type="term" value="C:ficolin-1-rich granule lumen"/>
    <property type="evidence" value="ECO:0000304"/>
    <property type="project" value="Reactome"/>
</dbReference>
<dbReference type="GO" id="GO:0071888">
    <property type="term" value="P:macrophage apoptotic process"/>
    <property type="evidence" value="ECO:0000318"/>
    <property type="project" value="GO_Central"/>
</dbReference>
<dbReference type="CDD" id="cd13317">
    <property type="entry name" value="PH_PLEKHO1_PLEKHO2"/>
    <property type="match status" value="1"/>
</dbReference>
<dbReference type="FunFam" id="2.30.29.30:FF:000490">
    <property type="entry name" value="Pleckstrin homology domain containing O2"/>
    <property type="match status" value="1"/>
</dbReference>
<dbReference type="Gene3D" id="2.30.29.30">
    <property type="entry name" value="Pleckstrin-homology domain (PH domain)/Phosphotyrosine-binding domain (PTB)"/>
    <property type="match status" value="1"/>
</dbReference>
<dbReference type="InterPro" id="IPR011993">
    <property type="entry name" value="PH-like_dom_sf"/>
</dbReference>
<dbReference type="InterPro" id="IPR001849">
    <property type="entry name" value="PH_domain"/>
</dbReference>
<dbReference type="InterPro" id="IPR043448">
    <property type="entry name" value="PKHO1/2"/>
</dbReference>
<dbReference type="PANTHER" id="PTHR15871">
    <property type="entry name" value="PH DOMAIN-CONTAINING PROTEIN"/>
    <property type="match status" value="1"/>
</dbReference>
<dbReference type="PANTHER" id="PTHR15871:SF2">
    <property type="entry name" value="PLECKSTRIN HOMOLOGY DOMAIN-CONTAINING FAMILY O MEMBER 2"/>
    <property type="match status" value="1"/>
</dbReference>
<dbReference type="Pfam" id="PF00169">
    <property type="entry name" value="PH"/>
    <property type="match status" value="1"/>
</dbReference>
<dbReference type="SMART" id="SM00233">
    <property type="entry name" value="PH"/>
    <property type="match status" value="1"/>
</dbReference>
<dbReference type="SUPFAM" id="SSF50729">
    <property type="entry name" value="PH domain-like"/>
    <property type="match status" value="1"/>
</dbReference>
<dbReference type="PROSITE" id="PS50003">
    <property type="entry name" value="PH_DOMAIN"/>
    <property type="match status" value="1"/>
</dbReference>
<protein>
    <recommendedName>
        <fullName>Pleckstrin homology domain-containing family O member 2</fullName>
        <shortName>PH domain-containing family O member 2</shortName>
    </recommendedName>
    <alternativeName>
        <fullName>Pleckstrin homology domain-containing family Q member 1</fullName>
        <shortName>PH domain-containing family Q member 1</shortName>
    </alternativeName>
</protein>
<accession>Q8TD55</accession>
<accession>Q7L4H4</accession>
<accession>Q8WYS8</accession>
<reference key="1">
    <citation type="submission" date="2002-03" db="EMBL/GenBank/DDBJ databases">
        <authorList>
            <person name="Li N."/>
            <person name="Wan T."/>
            <person name="Zhang W."/>
            <person name="Cao X."/>
        </authorList>
    </citation>
    <scope>NUCLEOTIDE SEQUENCE [MRNA] (ISOFORM 1)</scope>
</reference>
<reference key="2">
    <citation type="journal article" date="2006" name="Nature">
        <title>Analysis of the DNA sequence and duplication history of human chromosome 15.</title>
        <authorList>
            <person name="Zody M.C."/>
            <person name="Garber M."/>
            <person name="Sharpe T."/>
            <person name="Young S.K."/>
            <person name="Rowen L."/>
            <person name="O'Neill K."/>
            <person name="Whittaker C.A."/>
            <person name="Kamal M."/>
            <person name="Chang J.L."/>
            <person name="Cuomo C.A."/>
            <person name="Dewar K."/>
            <person name="FitzGerald M.G."/>
            <person name="Kodira C.D."/>
            <person name="Madan A."/>
            <person name="Qin S."/>
            <person name="Yang X."/>
            <person name="Abbasi N."/>
            <person name="Abouelleil A."/>
            <person name="Arachchi H.M."/>
            <person name="Baradarani L."/>
            <person name="Birditt B."/>
            <person name="Bloom S."/>
            <person name="Bloom T."/>
            <person name="Borowsky M.L."/>
            <person name="Burke J."/>
            <person name="Butler J."/>
            <person name="Cook A."/>
            <person name="DeArellano K."/>
            <person name="DeCaprio D."/>
            <person name="Dorris L. III"/>
            <person name="Dors M."/>
            <person name="Eichler E.E."/>
            <person name="Engels R."/>
            <person name="Fahey J."/>
            <person name="Fleetwood P."/>
            <person name="Friedman C."/>
            <person name="Gearin G."/>
            <person name="Hall J.L."/>
            <person name="Hensley G."/>
            <person name="Johnson E."/>
            <person name="Jones C."/>
            <person name="Kamat A."/>
            <person name="Kaur A."/>
            <person name="Locke D.P."/>
            <person name="Madan A."/>
            <person name="Munson G."/>
            <person name="Jaffe D.B."/>
            <person name="Lui A."/>
            <person name="Macdonald P."/>
            <person name="Mauceli E."/>
            <person name="Naylor J.W."/>
            <person name="Nesbitt R."/>
            <person name="Nicol R."/>
            <person name="O'Leary S.B."/>
            <person name="Ratcliffe A."/>
            <person name="Rounsley S."/>
            <person name="She X."/>
            <person name="Sneddon K.M.B."/>
            <person name="Stewart S."/>
            <person name="Sougnez C."/>
            <person name="Stone S.M."/>
            <person name="Topham K."/>
            <person name="Vincent D."/>
            <person name="Wang S."/>
            <person name="Zimmer A.R."/>
            <person name="Birren B.W."/>
            <person name="Hood L."/>
            <person name="Lander E.S."/>
            <person name="Nusbaum C."/>
        </authorList>
    </citation>
    <scope>NUCLEOTIDE SEQUENCE [LARGE SCALE GENOMIC DNA]</scope>
</reference>
<reference key="3">
    <citation type="submission" date="2005-09" db="EMBL/GenBank/DDBJ databases">
        <authorList>
            <person name="Mural R.J."/>
            <person name="Istrail S."/>
            <person name="Sutton G.G."/>
            <person name="Florea L."/>
            <person name="Halpern A.L."/>
            <person name="Mobarry C.M."/>
            <person name="Lippert R."/>
            <person name="Walenz B."/>
            <person name="Shatkay H."/>
            <person name="Dew I."/>
            <person name="Miller J.R."/>
            <person name="Flanigan M.J."/>
            <person name="Edwards N.J."/>
            <person name="Bolanos R."/>
            <person name="Fasulo D."/>
            <person name="Halldorsson B.V."/>
            <person name="Hannenhalli S."/>
            <person name="Turner R."/>
            <person name="Yooseph S."/>
            <person name="Lu F."/>
            <person name="Nusskern D.R."/>
            <person name="Shue B.C."/>
            <person name="Zheng X.H."/>
            <person name="Zhong F."/>
            <person name="Delcher A.L."/>
            <person name="Huson D.H."/>
            <person name="Kravitz S.A."/>
            <person name="Mouchard L."/>
            <person name="Reinert K."/>
            <person name="Remington K.A."/>
            <person name="Clark A.G."/>
            <person name="Waterman M.S."/>
            <person name="Eichler E.E."/>
            <person name="Adams M.D."/>
            <person name="Hunkapiller M.W."/>
            <person name="Myers E.W."/>
            <person name="Venter J.C."/>
        </authorList>
    </citation>
    <scope>NUCLEOTIDE SEQUENCE [LARGE SCALE GENOMIC DNA]</scope>
</reference>
<reference key="4">
    <citation type="journal article" date="2004" name="Genome Res.">
        <title>The status, quality, and expansion of the NIH full-length cDNA project: the Mammalian Gene Collection (MGC).</title>
        <authorList>
            <consortium name="The MGC Project Team"/>
        </authorList>
    </citation>
    <scope>NUCLEOTIDE SEQUENCE [LARGE SCALE MRNA] (ISOFORM 2)</scope>
    <source>
        <tissue>Skin</tissue>
    </source>
</reference>
<reference key="5">
    <citation type="journal article" date="2004" name="Proc. Natl. Acad. Sci. U.S.A.">
        <title>Large-scale cDNA transfection screening for genes related to cancer development and progression.</title>
        <authorList>
            <person name="Wan D."/>
            <person name="Gong Y."/>
            <person name="Qin W."/>
            <person name="Zhang P."/>
            <person name="Li J."/>
            <person name="Wei L."/>
            <person name="Zhou X."/>
            <person name="Li H."/>
            <person name="Qiu X."/>
            <person name="Zhong F."/>
            <person name="He L."/>
            <person name="Yu J."/>
            <person name="Yao G."/>
            <person name="Jiang H."/>
            <person name="Qian L."/>
            <person name="Yu Y."/>
            <person name="Shu H."/>
            <person name="Chen X."/>
            <person name="Xu H."/>
            <person name="Guo M."/>
            <person name="Pan Z."/>
            <person name="Chen Y."/>
            <person name="Ge C."/>
            <person name="Yang S."/>
            <person name="Gu J."/>
        </authorList>
    </citation>
    <scope>NUCLEOTIDE SEQUENCE [LARGE SCALE MRNA] OF 204-490</scope>
    <scope>VARIANT SER-290</scope>
</reference>
<reference key="6">
    <citation type="journal article" date="2013" name="J. Proteome Res.">
        <title>Toward a comprehensive characterization of a human cancer cell phosphoproteome.</title>
        <authorList>
            <person name="Zhou H."/>
            <person name="Di Palma S."/>
            <person name="Preisinger C."/>
            <person name="Peng M."/>
            <person name="Polat A.N."/>
            <person name="Heck A.J."/>
            <person name="Mohammed S."/>
        </authorList>
    </citation>
    <scope>PHOSPHORYLATION [LARGE SCALE ANALYSIS] AT THR-311; SER-390 AND SER-468</scope>
    <scope>IDENTIFICATION BY MASS SPECTROMETRY [LARGE SCALE ANALYSIS]</scope>
    <source>
        <tissue>Erythroleukemia</tissue>
    </source>
</reference>
<reference key="7">
    <citation type="journal article" date="2014" name="J. Proteomics">
        <title>An enzyme assisted RP-RPLC approach for in-depth analysis of human liver phosphoproteome.</title>
        <authorList>
            <person name="Bian Y."/>
            <person name="Song C."/>
            <person name="Cheng K."/>
            <person name="Dong M."/>
            <person name="Wang F."/>
            <person name="Huang J."/>
            <person name="Sun D."/>
            <person name="Wang L."/>
            <person name="Ye M."/>
            <person name="Zou H."/>
        </authorList>
    </citation>
    <scope>PHOSPHORYLATION [LARGE SCALE ANALYSIS] AT SER-164; SER-167; SER-273; THR-311 AND SER-390</scope>
    <scope>IDENTIFICATION BY MASS SPECTROMETRY [LARGE SCALE ANALYSIS]</scope>
    <source>
        <tissue>Liver</tissue>
    </source>
</reference>
<evidence type="ECO:0000250" key="1">
    <source>
        <dbReference type="UniProtKB" id="Q8K124"/>
    </source>
</evidence>
<evidence type="ECO:0000255" key="2"/>
<evidence type="ECO:0000255" key="3">
    <source>
        <dbReference type="PROSITE-ProRule" id="PRU00145"/>
    </source>
</evidence>
<evidence type="ECO:0000256" key="4">
    <source>
        <dbReference type="SAM" id="MobiDB-lite"/>
    </source>
</evidence>
<evidence type="ECO:0000269" key="5">
    <source>
    </source>
</evidence>
<evidence type="ECO:0000303" key="6">
    <source>
    </source>
</evidence>
<evidence type="ECO:0000305" key="7"/>
<evidence type="ECO:0007744" key="8">
    <source>
    </source>
</evidence>
<evidence type="ECO:0007744" key="9">
    <source>
    </source>
</evidence>
<proteinExistence type="evidence at protein level"/>
<organism>
    <name type="scientific">Homo sapiens</name>
    <name type="common">Human</name>
    <dbReference type="NCBI Taxonomy" id="9606"/>
    <lineage>
        <taxon>Eukaryota</taxon>
        <taxon>Metazoa</taxon>
        <taxon>Chordata</taxon>
        <taxon>Craniata</taxon>
        <taxon>Vertebrata</taxon>
        <taxon>Euteleostomi</taxon>
        <taxon>Mammalia</taxon>
        <taxon>Eutheria</taxon>
        <taxon>Euarchontoglires</taxon>
        <taxon>Primates</taxon>
        <taxon>Haplorrhini</taxon>
        <taxon>Catarrhini</taxon>
        <taxon>Hominidae</taxon>
        <taxon>Homo</taxon>
    </lineage>
</organism>
<gene>
    <name type="primary">PLEKHO2</name>
    <name type="synonym">PLEKHQ1</name>
    <name type="ORF">PP9099</name>
</gene>
<comment type="interaction">
    <interactant intactId="EBI-12905986">
        <id>Q8TD55-2</id>
    </interactant>
    <interactant intactId="EBI-395261">
        <id>P24863</id>
        <label>CCNC</label>
    </interactant>
    <organismsDiffer>false</organismsDiffer>
    <experiments>3</experiments>
</comment>
<comment type="alternative products">
    <event type="alternative splicing"/>
    <isoform>
        <id>Q8TD55-1</id>
        <name>1</name>
        <sequence type="displayed"/>
    </isoform>
    <isoform>
        <id>Q8TD55-2</id>
        <name>2</name>
        <sequence type="described" ref="VSP_029212"/>
    </isoform>
</comment>
<comment type="sequence caution" evidence="7">
    <conflict type="erroneous initiation">
        <sequence resource="EMBL-CDS" id="AAL55880"/>
    </conflict>
</comment>
<sequence length="490" mass="53350">MEEEGVKEAGEKPRGAQMVDKAGWIKKSSGGLLGFWKDRYLLLCQAQLLVYENEDDQKCVETVELGSYEKCQDLRALLKRKHRFILLRSPGNKVSDIKFQAPTGEEKESWIKALNEGINRGKNKAFDEVKVDKSCALEHVTRDRVRGGQRRRPPTRVHLKEVASAASDGLLRLDLDVPDSGPPVFAPSNHVSEAQPRETPRPLMPPTKPFLAPETTSPGDRVETPVGERAPTPVSASSEVSPESQEDSETPAEEDSGSEQPPNSVLPDKLKVSWENPSPQEAPAAESAEPSQAPCSETSEAAPREGGKPPTPPPKILSEKLKASMGEMQASGPPAPGTVQVSVNGMDDSPEPAKPSQAEGTPGTPPKDATTSTALPPWDLPPQFHPRCSSLGDLLGEGPRHPLQPRERLYRAQLEVKVASEQTEKLLNKVLGSEPAPVSAETLLSQAVEQLRQATQVLQEMRDLGELSQEAPGLREKRKELVTLYRRSAP</sequence>